<feature type="initiator methionine" description="Removed" evidence="3">
    <location>
        <position position="1"/>
    </location>
</feature>
<feature type="chain" id="PRO_0000441171" description="Protein NDRG2">
    <location>
        <begin position="2"/>
        <end position="371"/>
    </location>
</feature>
<feature type="region of interest" description="Disordered" evidence="4">
    <location>
        <begin position="1"/>
        <end position="22"/>
    </location>
</feature>
<feature type="region of interest" description="Disordered" evidence="4">
    <location>
        <begin position="334"/>
        <end position="371"/>
    </location>
</feature>
<feature type="modified residue" description="N-acetylalanine" evidence="3">
    <location>
        <position position="2"/>
    </location>
</feature>
<feature type="modified residue" description="Phosphothreonine" evidence="13">
    <location>
        <position position="20"/>
    </location>
</feature>
<feature type="modified residue" description="Phosphoserine" evidence="13">
    <location>
        <position position="326"/>
    </location>
</feature>
<feature type="modified residue" description="Phosphoserine" evidence="13">
    <location>
        <position position="328"/>
    </location>
</feature>
<feature type="modified residue" description="Phosphothreonine" evidence="13">
    <location>
        <position position="330"/>
    </location>
</feature>
<feature type="modified residue" description="Phosphoserine" evidence="6 13">
    <location>
        <position position="332"/>
    </location>
</feature>
<feature type="modified residue" description="Phosphothreonine" evidence="3">
    <location>
        <position position="334"/>
    </location>
</feature>
<feature type="modified residue" description="Phosphoserine" evidence="2">
    <location>
        <position position="335"/>
    </location>
</feature>
<feature type="modified residue" description="Phosphoserine" evidence="12 13">
    <location>
        <position position="338"/>
    </location>
</feature>
<feature type="modified residue" description="Phosphoserine" evidence="3">
    <location>
        <position position="344"/>
    </location>
</feature>
<feature type="modified residue" description="Phosphothreonine" evidence="2">
    <location>
        <position position="348"/>
    </location>
</feature>
<feature type="modified residue" description="Phosphoserine" evidence="2">
    <location>
        <position position="350"/>
    </location>
</feature>
<feature type="modified residue" description="Phosphoserine" evidence="2">
    <location>
        <position position="352"/>
    </location>
</feature>
<feature type="modified residue" description="Phosphoserine" evidence="2">
    <location>
        <position position="353"/>
    </location>
</feature>
<feature type="modified residue" description="Phosphoserine" evidence="2">
    <location>
        <position position="355"/>
    </location>
</feature>
<feature type="modified residue" description="Phosphothreonine" evidence="2">
    <location>
        <position position="357"/>
    </location>
</feature>
<feature type="modified residue" description="Phosphoserine" evidence="2">
    <location>
        <position position="370"/>
    </location>
</feature>
<feature type="splice variant" id="VSP_019032" description="In isoform 2." evidence="9 10">
    <location>
        <begin position="26"/>
        <end position="39"/>
    </location>
</feature>
<feature type="sequence conflict" description="In Ref. 2; AAL73186/AAL73187." evidence="11" ref="2">
    <original>Q</original>
    <variation>L</variation>
    <location>
        <position position="121"/>
    </location>
</feature>
<keyword id="KW-0007">Acetylation</keyword>
<keyword id="KW-0025">Alternative splicing</keyword>
<keyword id="KW-0966">Cell projection</keyword>
<keyword id="KW-0963">Cytoplasm</keyword>
<keyword id="KW-0217">Developmental protein</keyword>
<keyword id="KW-0221">Differentiation</keyword>
<keyword id="KW-0903">Direct protein sequencing</keyword>
<keyword id="KW-0524">Neurogenesis</keyword>
<keyword id="KW-0597">Phosphoprotein</keyword>
<keyword id="KW-1185">Reference proteome</keyword>
<keyword id="KW-0043">Tumor suppressor</keyword>
<keyword id="KW-0879">Wnt signaling pathway</keyword>
<name>NDRG2_RAT</name>
<gene>
    <name type="primary">Ndrg2</name>
</gene>
<dbReference type="EMBL" id="AJ426424">
    <property type="protein sequence ID" value="CAD19997.1"/>
    <property type="molecule type" value="mRNA"/>
</dbReference>
<dbReference type="EMBL" id="AJ426425">
    <property type="protein sequence ID" value="CAD19998.1"/>
    <property type="molecule type" value="mRNA"/>
</dbReference>
<dbReference type="EMBL" id="AJ426426">
    <property type="protein sequence ID" value="CAD19999.1"/>
    <property type="molecule type" value="mRNA"/>
</dbReference>
<dbReference type="EMBL" id="AJ426427">
    <property type="protein sequence ID" value="CAD20000.1"/>
    <property type="molecule type" value="mRNA"/>
</dbReference>
<dbReference type="EMBL" id="AF334105">
    <property type="protein sequence ID" value="AAL73186.1"/>
    <property type="molecule type" value="mRNA"/>
</dbReference>
<dbReference type="EMBL" id="AF334106">
    <property type="protein sequence ID" value="AAL73187.1"/>
    <property type="molecule type" value="mRNA"/>
</dbReference>
<dbReference type="RefSeq" id="NP_001257791.1">
    <property type="nucleotide sequence ID" value="NM_001270862.1"/>
</dbReference>
<dbReference type="RefSeq" id="NP_001257792.1">
    <property type="nucleotide sequence ID" value="NM_001270863.1"/>
</dbReference>
<dbReference type="RefSeq" id="NP_001257793.1">
    <property type="nucleotide sequence ID" value="NM_001270864.1"/>
</dbReference>
<dbReference type="RefSeq" id="NP_598267.2">
    <property type="nucleotide sequence ID" value="NM_133583.2"/>
</dbReference>
<dbReference type="SMR" id="Q8VBU2"/>
<dbReference type="BioGRID" id="251122">
    <property type="interactions" value="3"/>
</dbReference>
<dbReference type="FunCoup" id="Q8VBU2">
    <property type="interactions" value="1117"/>
</dbReference>
<dbReference type="IntAct" id="Q8VBU2">
    <property type="interactions" value="2"/>
</dbReference>
<dbReference type="MINT" id="Q8VBU2"/>
<dbReference type="STRING" id="10116.ENSRNOP00000042949"/>
<dbReference type="ESTHER" id="ratno-NDRG2">
    <property type="family name" value="Ndr_family"/>
</dbReference>
<dbReference type="iPTMnet" id="Q8VBU2"/>
<dbReference type="PhosphoSitePlus" id="Q8VBU2"/>
<dbReference type="SwissPalm" id="Q8VBU2"/>
<dbReference type="PaxDb" id="10116-ENSRNOP00000042949"/>
<dbReference type="GeneID" id="171114"/>
<dbReference type="KEGG" id="rno:171114"/>
<dbReference type="UCSC" id="RGD:621874">
    <molecule id="Q8VBU2-1"/>
    <property type="organism name" value="rat"/>
</dbReference>
<dbReference type="AGR" id="RGD:621874"/>
<dbReference type="CTD" id="57447"/>
<dbReference type="RGD" id="621874">
    <property type="gene designation" value="Ndrg2"/>
</dbReference>
<dbReference type="eggNOG" id="KOG2931">
    <property type="taxonomic scope" value="Eukaryota"/>
</dbReference>
<dbReference type="InParanoid" id="Q8VBU2"/>
<dbReference type="OrthoDB" id="42963at9989"/>
<dbReference type="PhylomeDB" id="Q8VBU2"/>
<dbReference type="TreeFam" id="TF313168"/>
<dbReference type="PRO" id="PR:Q8VBU2"/>
<dbReference type="Proteomes" id="UP000002494">
    <property type="component" value="Unplaced"/>
</dbReference>
<dbReference type="GO" id="GO:0005737">
    <property type="term" value="C:cytoplasm"/>
    <property type="evidence" value="ECO:0000266"/>
    <property type="project" value="RGD"/>
</dbReference>
<dbReference type="GO" id="GO:0030426">
    <property type="term" value="C:growth cone"/>
    <property type="evidence" value="ECO:0007669"/>
    <property type="project" value="UniProtKB-SubCell"/>
</dbReference>
<dbReference type="GO" id="GO:0005634">
    <property type="term" value="C:nucleus"/>
    <property type="evidence" value="ECO:0000266"/>
    <property type="project" value="RGD"/>
</dbReference>
<dbReference type="GO" id="GO:0048471">
    <property type="term" value="C:perinuclear region of cytoplasm"/>
    <property type="evidence" value="ECO:0007669"/>
    <property type="project" value="UniProtKB-SubCell"/>
</dbReference>
<dbReference type="GO" id="GO:0030154">
    <property type="term" value="P:cell differentiation"/>
    <property type="evidence" value="ECO:0007669"/>
    <property type="project" value="UniProtKB-KW"/>
</dbReference>
<dbReference type="GO" id="GO:0001818">
    <property type="term" value="P:negative regulation of cytokine production"/>
    <property type="evidence" value="ECO:0000266"/>
    <property type="project" value="RGD"/>
</dbReference>
<dbReference type="GO" id="GO:0070373">
    <property type="term" value="P:negative regulation of ERK1 and ERK2 cascade"/>
    <property type="evidence" value="ECO:0000266"/>
    <property type="project" value="RGD"/>
</dbReference>
<dbReference type="GO" id="GO:1904706">
    <property type="term" value="P:negative regulation of vascular associated smooth muscle cell proliferation"/>
    <property type="evidence" value="ECO:0000266"/>
    <property type="project" value="RGD"/>
</dbReference>
<dbReference type="GO" id="GO:0007399">
    <property type="term" value="P:nervous system development"/>
    <property type="evidence" value="ECO:0007669"/>
    <property type="project" value="UniProtKB-KW"/>
</dbReference>
<dbReference type="GO" id="GO:0090361">
    <property type="term" value="P:regulation of platelet-derived growth factor production"/>
    <property type="evidence" value="ECO:0000266"/>
    <property type="project" value="RGD"/>
</dbReference>
<dbReference type="GO" id="GO:0010574">
    <property type="term" value="P:regulation of vascular endothelial growth factor production"/>
    <property type="evidence" value="ECO:0000266"/>
    <property type="project" value="RGD"/>
</dbReference>
<dbReference type="GO" id="GO:0007165">
    <property type="term" value="P:signal transduction"/>
    <property type="evidence" value="ECO:0000318"/>
    <property type="project" value="GO_Central"/>
</dbReference>
<dbReference type="GO" id="GO:1990874">
    <property type="term" value="P:vascular associated smooth muscle cell proliferation"/>
    <property type="evidence" value="ECO:0000266"/>
    <property type="project" value="RGD"/>
</dbReference>
<dbReference type="GO" id="GO:0016055">
    <property type="term" value="P:Wnt signaling pathway"/>
    <property type="evidence" value="ECO:0007669"/>
    <property type="project" value="UniProtKB-KW"/>
</dbReference>
<dbReference type="FunFam" id="3.40.50.1820:FF:000034">
    <property type="entry name" value="NDRG2 isoform 1"/>
    <property type="match status" value="1"/>
</dbReference>
<dbReference type="Gene3D" id="3.40.50.1820">
    <property type="entry name" value="alpha/beta hydrolase"/>
    <property type="match status" value="1"/>
</dbReference>
<dbReference type="InterPro" id="IPR029058">
    <property type="entry name" value="AB_hydrolase_fold"/>
</dbReference>
<dbReference type="InterPro" id="IPR004142">
    <property type="entry name" value="NDRG"/>
</dbReference>
<dbReference type="PANTHER" id="PTHR11034">
    <property type="entry name" value="N-MYC DOWNSTREAM REGULATED"/>
    <property type="match status" value="1"/>
</dbReference>
<dbReference type="Pfam" id="PF03096">
    <property type="entry name" value="Ndr"/>
    <property type="match status" value="1"/>
</dbReference>
<dbReference type="SUPFAM" id="SSF53474">
    <property type="entry name" value="alpha/beta-Hydrolases"/>
    <property type="match status" value="1"/>
</dbReference>
<proteinExistence type="evidence at protein level"/>
<sequence length="371" mass="40779">MAELQEVQITEEKPLLPGQTPEAAKEAELAARILLDQGQTHSVETPYGSVTFTVYGTPKPKRPAIFTYHDVGLNYKSCFQPLFQFGDMQEIIQNFVRVHVDAPGMEEGAPVFPLGYQYPSQDQLADMIPCILQYLNFSTIIGVGVGAGAYILSRYALNHPDTVEGLVLINIDPNAKGWMDWAAHKLTGLTSSIPEMILGHLFSQEELSGNSELIQKYRSLITHAPNLENIELYWNSYNNRRDLNFERGGEMTLKCPVMLVVGDQAPHEDAVVECNSKLDPTQTSFLKMADSGGQPQLTQPGKLTEAFKYFVQGMGYMASSCMTRLSRSRTASLTSAASIDGSRSRSRTLSQSSESGTLPSGPPGHTMEVSC</sequence>
<accession>Q8VBU2</accession>
<accession>Q8VBW2</accession>
<accession>Q8VI00</accession>
<accession>Q8VI01</accession>
<organism>
    <name type="scientific">Rattus norvegicus</name>
    <name type="common">Rat</name>
    <dbReference type="NCBI Taxonomy" id="10116"/>
    <lineage>
        <taxon>Eukaryota</taxon>
        <taxon>Metazoa</taxon>
        <taxon>Chordata</taxon>
        <taxon>Craniata</taxon>
        <taxon>Vertebrata</taxon>
        <taxon>Euteleostomi</taxon>
        <taxon>Mammalia</taxon>
        <taxon>Eutheria</taxon>
        <taxon>Euarchontoglires</taxon>
        <taxon>Glires</taxon>
        <taxon>Rodentia</taxon>
        <taxon>Myomorpha</taxon>
        <taxon>Muroidea</taxon>
        <taxon>Muridae</taxon>
        <taxon>Murinae</taxon>
        <taxon>Rattus</taxon>
    </lineage>
</organism>
<reference key="1">
    <citation type="journal article" date="2002" name="J. Biol. Chem.">
        <title>Characterization of rat NDRG2 (N-Myc downstream regulated gene 2), a novel early mineralocorticoid-specific induced gene.</title>
        <authorList>
            <person name="Boulkroun S."/>
            <person name="Fay M."/>
            <person name="Zennaro M.-C."/>
            <person name="Escoubet B."/>
            <person name="Jaisser F."/>
            <person name="Blot-Chabaud M."/>
            <person name="Farman N."/>
            <person name="Courtois-Coutry N."/>
        </authorList>
    </citation>
    <scope>NUCLEOTIDE SEQUENCE [MRNA] (ISOFORMS 1 AND 2)</scope>
    <scope>TISSUE SPECIFICITY</scope>
    <scope>INDUCTION</scope>
    <source>
        <strain>Sprague-Dawley</strain>
        <tissue>Heart</tissue>
    </source>
</reference>
<reference key="2">
    <citation type="journal article" date="2005" name="Int. J. Neuropsychopharmacol.">
        <title>Expression of Ndrg2 in the rat frontal cortex after antidepressant and electroconvulsive treatment.</title>
        <authorList>
            <person name="Takahashi K."/>
            <person name="Yamada M."/>
            <person name="Ohata H."/>
            <person name="Momose K."/>
            <person name="Higuchi T."/>
            <person name="Honda K."/>
            <person name="Yamada M."/>
        </authorList>
    </citation>
    <scope>NUCLEOTIDE SEQUENCE [MRNA] (ISOFORMS 1 AND 2)</scope>
    <scope>INDUCTION</scope>
</reference>
<reference key="3">
    <citation type="submission" date="2007-04" db="UniProtKB">
        <authorList>
            <person name="Lubec G."/>
            <person name="Chen W.-Q."/>
        </authorList>
    </citation>
    <scope>PROTEIN SEQUENCE OF 62-76 AND 155-176</scope>
    <scope>IDENTIFICATION BY MASS SPECTROMETRY</scope>
    <source>
        <strain>Sprague-Dawley</strain>
        <tissue>Hippocampus</tissue>
    </source>
</reference>
<reference key="4">
    <citation type="journal article" date="2004" name="J. Biol. Chem.">
        <title>Akt mediates insulin-stimulated phosphorylation of Ndrg2: evidence for cross-talk with protein kinase C theta.</title>
        <authorList>
            <person name="Burchfield J.G."/>
            <person name="Lennard A.J."/>
            <person name="Narasimhan S."/>
            <person name="Hughes W.E."/>
            <person name="Wasinger V.C."/>
            <person name="Corthals G.L."/>
            <person name="Okuda T."/>
            <person name="Kondoh H."/>
            <person name="Biden T.J."/>
            <person name="Schmitz-Peiffer C."/>
        </authorList>
    </citation>
    <scope>IDENTIFICATION BY MASS SPECTROMETRY (ISOFORM 1)</scope>
    <scope>PHOSPHORYLATION AT SER-332</scope>
</reference>
<reference key="5">
    <citation type="journal article" date="2005" name="Neurosci. Lett.">
        <title>Ndrg2 promotes neurite outgrowth of NGF-differentiated PC12 cells.</title>
        <authorList>
            <person name="Takahashi K."/>
            <person name="Yamada M."/>
            <person name="Ohata H."/>
            <person name="Honda K."/>
            <person name="Yamada M."/>
        </authorList>
    </citation>
    <scope>FUNCTION</scope>
    <scope>DEVELOPMENTAL STAGE</scope>
</reference>
<reference key="6">
    <citation type="journal article" date="2006" name="J. Proteome Res.">
        <title>Phosphoproteomic analysis of rat liver by high capacity IMAC and LC-MS/MS.</title>
        <authorList>
            <person name="Moser K."/>
            <person name="White F.M."/>
        </authorList>
    </citation>
    <scope>PHOSPHORYLATION [LARGE SCALE ANALYSIS] AT SER-338</scope>
    <scope>IDENTIFICATION BY MASS SPECTROMETRY [LARGE SCALE ANALYSIS]</scope>
</reference>
<reference key="7">
    <citation type="journal article" date="2012" name="Nat. Commun.">
        <title>Quantitative maps of protein phosphorylation sites across 14 different rat organs and tissues.</title>
        <authorList>
            <person name="Lundby A."/>
            <person name="Secher A."/>
            <person name="Lage K."/>
            <person name="Nordsborg N.B."/>
            <person name="Dmytriyev A."/>
            <person name="Lundby C."/>
            <person name="Olsen J.V."/>
        </authorList>
    </citation>
    <scope>PHOSPHORYLATION [LARGE SCALE ANALYSIS] AT THR-20; SER-326; SER-328; THR-330; SER-332 AND SER-338</scope>
    <scope>IDENTIFICATION BY MASS SPECTROMETRY [LARGE SCALE ANALYSIS]</scope>
</reference>
<comment type="function">
    <text evidence="1 8">Contributes to the regulation of the Wnt signaling pathway. Down-regulates CTNNB1-mediated transcriptional activation of target genes, such as CCND1, and may thereby act as tumor suppressor (By similarity). May be involved in dendritic cell and neuron differentiation.</text>
</comment>
<comment type="subcellular location">
    <subcellularLocation>
        <location evidence="1">Cytoplasm</location>
    </subcellularLocation>
    <subcellularLocation>
        <location evidence="1">Cytoplasm</location>
        <location evidence="1">Perinuclear region</location>
    </subcellularLocation>
    <subcellularLocation>
        <location>Cell projection</location>
        <location>Growth cone</location>
    </subcellularLocation>
    <text>In neurons, seems to concentrate at axonal growth cone.</text>
</comment>
<comment type="alternative products">
    <event type="alternative splicing"/>
    <isoform>
        <id>Q8VBU2-1</id>
        <name>1</name>
        <name>Ndrg2L</name>
        <sequence type="displayed"/>
    </isoform>
    <isoform>
        <id>Q8VBU2-2</id>
        <name>2</name>
        <name>Ndrg2S</name>
        <sequence type="described" ref="VSP_019032"/>
    </isoform>
</comment>
<comment type="tissue specificity">
    <text evidence="5">Broadly expressed, with highest levels in heart, liver, skeletal muscle and aorta.</text>
</comment>
<comment type="induction">
    <text evidence="5 7">Up-regulated by aldosterone in kidney and colon, but not in heart. Down-regulated in cortex by antidepressant treatments.</text>
</comment>
<comment type="similarity">
    <text evidence="11">Belongs to the NDRG family.</text>
</comment>
<evidence type="ECO:0000250" key="1"/>
<evidence type="ECO:0000250" key="2">
    <source>
        <dbReference type="UniProtKB" id="Q9QYG0"/>
    </source>
</evidence>
<evidence type="ECO:0000250" key="3">
    <source>
        <dbReference type="UniProtKB" id="Q9UN36"/>
    </source>
</evidence>
<evidence type="ECO:0000256" key="4">
    <source>
        <dbReference type="SAM" id="MobiDB-lite"/>
    </source>
</evidence>
<evidence type="ECO:0000269" key="5">
    <source>
    </source>
</evidence>
<evidence type="ECO:0000269" key="6">
    <source>
    </source>
</evidence>
<evidence type="ECO:0000269" key="7">
    <source>
    </source>
</evidence>
<evidence type="ECO:0000269" key="8">
    <source>
    </source>
</evidence>
<evidence type="ECO:0000303" key="9">
    <source>
    </source>
</evidence>
<evidence type="ECO:0000303" key="10">
    <source>
    </source>
</evidence>
<evidence type="ECO:0000305" key="11"/>
<evidence type="ECO:0007744" key="12">
    <source>
    </source>
</evidence>
<evidence type="ECO:0007744" key="13">
    <source>
    </source>
</evidence>
<protein>
    <recommendedName>
        <fullName>Protein NDRG2</fullName>
    </recommendedName>
    <alternativeName>
        <fullName>Antidepressant-related protein ADRG123</fullName>
    </alternativeName>
    <alternativeName>
        <fullName>N-myc downstream-regulated gene 2 protein</fullName>
    </alternativeName>
    <alternativeName>
        <fullName>NDRG1-related protein</fullName>
    </alternativeName>
</protein>